<proteinExistence type="evidence at protein level"/>
<gene>
    <name evidence="1" type="primary">mtnP</name>
    <name type="ordered locus">SSO2343</name>
</gene>
<reference key="1">
    <citation type="journal article" date="2001" name="Proc. Natl. Acad. Sci. U.S.A.">
        <title>The complete genome of the crenarchaeon Sulfolobus solfataricus P2.</title>
        <authorList>
            <person name="She Q."/>
            <person name="Singh R.K."/>
            <person name="Confalonieri F."/>
            <person name="Zivanovic Y."/>
            <person name="Allard G."/>
            <person name="Awayez M.J."/>
            <person name="Chan-Weiher C.C.-Y."/>
            <person name="Clausen I.G."/>
            <person name="Curtis B.A."/>
            <person name="De Moors A."/>
            <person name="Erauso G."/>
            <person name="Fletcher C."/>
            <person name="Gordon P.M.K."/>
            <person name="Heikamp-de Jong I."/>
            <person name="Jeffries A.C."/>
            <person name="Kozera C.J."/>
            <person name="Medina N."/>
            <person name="Peng X."/>
            <person name="Thi-Ngoc H.P."/>
            <person name="Redder P."/>
            <person name="Schenk M.E."/>
            <person name="Theriault C."/>
            <person name="Tolstrup N."/>
            <person name="Charlebois R.L."/>
            <person name="Doolittle W.F."/>
            <person name="Duguet M."/>
            <person name="Gaasterland T."/>
            <person name="Garrett R.A."/>
            <person name="Ragan M.A."/>
            <person name="Sensen C.W."/>
            <person name="Van der Oost J."/>
        </authorList>
    </citation>
    <scope>NUCLEOTIDE SEQUENCE [LARGE SCALE GENOMIC DNA]</scope>
    <source>
        <strain>ATCC 35092 / DSM 1617 / JCM 11322 / P2</strain>
    </source>
</reference>
<reference key="2">
    <citation type="journal article" date="2005" name="FEBS J.">
        <title>A novel hyperthermostable 5'-deoxy-5'-methylthioadenosine phosphorylase from the archaeon Sulfolobus solfataricus.</title>
        <authorList>
            <person name="Cacciapuoti G."/>
            <person name="Forte S."/>
            <person name="Moretti M.A."/>
            <person name="Brio A."/>
            <person name="Zappia V."/>
            <person name="Porcelli M."/>
        </authorList>
    </citation>
    <scope>FUNCTION</scope>
    <scope>BIOPHYSICOCHEMICAL PROPERTIES</scope>
    <scope>MUTAGENESIS OF CYS-259; CYS-261 AND CYS-262</scope>
    <scope>SUBUNIT</scope>
</reference>
<reference key="3">
    <citation type="journal article" date="2006" name="J. Mol. Biol.">
        <title>The crystal structure of 5'-deoxy-5'-methylthioadenosine phosphorylase II from Sulfolobus solfataricus, a thermophilic enzyme stabilized by intramolecular disulfide bonds.</title>
        <authorList>
            <person name="Zhang Y."/>
            <person name="Porcelli M."/>
            <person name="Cacciapuoti G."/>
            <person name="Ealick S.E."/>
        </authorList>
    </citation>
    <scope>X-RAY CRYSTALLOGRAPHY (1.45 ANGSTROMS) IN COMPLEX WITH SUBSTRATES</scope>
    <scope>DISULFIDE BONDS</scope>
</reference>
<feature type="chain" id="PRO_0000415109" description="S-methyl-5'-thioadenosine phosphorylase">
    <location>
        <begin position="1"/>
        <end position="270"/>
    </location>
</feature>
<feature type="binding site" evidence="1">
    <location>
        <position position="16"/>
    </location>
    <ligand>
        <name>phosphate</name>
        <dbReference type="ChEBI" id="CHEBI:43474"/>
    </ligand>
</feature>
<feature type="binding site" evidence="1">
    <location>
        <begin position="58"/>
        <end position="59"/>
    </location>
    <ligand>
        <name>phosphate</name>
        <dbReference type="ChEBI" id="CHEBI:43474"/>
    </ligand>
</feature>
<feature type="binding site" evidence="1">
    <location>
        <begin position="91"/>
        <end position="92"/>
    </location>
    <ligand>
        <name>phosphate</name>
        <dbReference type="ChEBI" id="CHEBI:43474"/>
    </ligand>
</feature>
<feature type="binding site" evidence="1">
    <location>
        <position position="190"/>
    </location>
    <ligand>
        <name>substrate</name>
    </ligand>
</feature>
<feature type="binding site" evidence="1">
    <location>
        <position position="191"/>
    </location>
    <ligand>
        <name>phosphate</name>
        <dbReference type="ChEBI" id="CHEBI:43474"/>
    </ligand>
</feature>
<feature type="binding site" evidence="1">
    <location>
        <begin position="214"/>
        <end position="216"/>
    </location>
    <ligand>
        <name>substrate</name>
    </ligand>
</feature>
<feature type="site" description="Important for substrate specificity" evidence="1">
    <location>
        <position position="171"/>
    </location>
</feature>
<feature type="site" description="Important for substrate specificity" evidence="1">
    <location>
        <position position="225"/>
    </location>
</feature>
<feature type="disulfide bond" evidence="3">
    <location>
        <begin position="138"/>
        <end position="205"/>
    </location>
</feature>
<feature type="disulfide bond" evidence="3">
    <location>
        <begin position="200"/>
        <end position="262"/>
    </location>
</feature>
<feature type="disulfide bond" evidence="3">
    <location>
        <begin position="259"/>
        <end position="261"/>
    </location>
</feature>
<feature type="mutagenesis site" description="Reduces thermostability of the enzyme; when associated with S-261." evidence="2">
    <original>C</original>
    <variation>S</variation>
    <location>
        <position position="259"/>
    </location>
</feature>
<feature type="mutagenesis site" description="Reduces thermostability of the enzyme; when associated with S-259." evidence="2">
    <original>C</original>
    <variation>S</variation>
    <location>
        <position position="261"/>
    </location>
</feature>
<feature type="mutagenesis site" description="Reduces thermostability of the enzyme." evidence="2">
    <original>C</original>
    <variation>S</variation>
    <location>
        <position position="262"/>
    </location>
</feature>
<feature type="strand" evidence="4">
    <location>
        <begin position="9"/>
        <end position="14"/>
    </location>
</feature>
<feature type="strand" evidence="4">
    <location>
        <begin position="25"/>
        <end position="30"/>
    </location>
</feature>
<feature type="strand" evidence="4">
    <location>
        <begin position="43"/>
        <end position="48"/>
    </location>
</feature>
<feature type="strand" evidence="4">
    <location>
        <begin position="51"/>
        <end position="57"/>
    </location>
</feature>
<feature type="turn" evidence="4">
    <location>
        <begin position="58"/>
        <end position="60"/>
    </location>
</feature>
<feature type="helix" evidence="4">
    <location>
        <begin position="61"/>
        <end position="63"/>
    </location>
</feature>
<feature type="helix" evidence="4">
    <location>
        <begin position="67"/>
        <end position="69"/>
    </location>
</feature>
<feature type="helix" evidence="4">
    <location>
        <begin position="72"/>
        <end position="81"/>
    </location>
</feature>
<feature type="strand" evidence="4">
    <location>
        <begin position="86"/>
        <end position="97"/>
    </location>
</feature>
<feature type="strand" evidence="4">
    <location>
        <begin position="110"/>
        <end position="114"/>
    </location>
</feature>
<feature type="strand" evidence="4">
    <location>
        <begin position="125"/>
        <end position="127"/>
    </location>
</feature>
<feature type="helix" evidence="4">
    <location>
        <begin position="139"/>
        <end position="152"/>
    </location>
</feature>
<feature type="strand" evidence="4">
    <location>
        <begin position="156"/>
        <end position="158"/>
    </location>
</feature>
<feature type="strand" evidence="4">
    <location>
        <begin position="161"/>
        <end position="165"/>
    </location>
</feature>
<feature type="helix" evidence="4">
    <location>
        <begin position="173"/>
        <end position="181"/>
    </location>
</feature>
<feature type="strand" evidence="4">
    <location>
        <begin position="187"/>
        <end position="191"/>
    </location>
</feature>
<feature type="helix" evidence="4">
    <location>
        <begin position="192"/>
        <end position="201"/>
    </location>
</feature>
<feature type="strand" evidence="4">
    <location>
        <begin position="205"/>
        <end position="214"/>
    </location>
</feature>
<feature type="strand" evidence="4">
    <location>
        <begin position="218"/>
        <end position="221"/>
    </location>
</feature>
<feature type="helix" evidence="4">
    <location>
        <begin position="225"/>
        <end position="234"/>
    </location>
</feature>
<feature type="helix" evidence="4">
    <location>
        <begin position="236"/>
        <end position="249"/>
    </location>
</feature>
<feature type="helix" evidence="5">
    <location>
        <begin position="256"/>
        <end position="258"/>
    </location>
</feature>
<feature type="turn" evidence="5">
    <location>
        <begin position="260"/>
        <end position="263"/>
    </location>
</feature>
<feature type="helix" evidence="4">
    <location>
        <begin position="266"/>
        <end position="268"/>
    </location>
</feature>
<keyword id="KW-0002">3D-structure</keyword>
<keyword id="KW-1015">Disulfide bond</keyword>
<keyword id="KW-0328">Glycosyltransferase</keyword>
<keyword id="KW-0660">Purine salvage</keyword>
<keyword id="KW-1185">Reference proteome</keyword>
<keyword id="KW-0808">Transferase</keyword>
<comment type="function">
    <text evidence="1 2">Catalyzes the reversible phosphorylation of S-methyl-5'-thioadenosine (MTA) to adenine and 5-methylthioribose-1-phosphate. Involved in the breakdown of MTA, a major by-product of polyamine biosynthesis. Responsible for the first step in the methionine salvage pathway after MTA has been generated from S-adenosylmethionine. Has broad substrate specificity with 6-aminopurine nucleosides as preferred substrates.</text>
</comment>
<comment type="catalytic activity">
    <reaction evidence="1">
        <text>S-methyl-5'-thioadenosine + phosphate = 5-(methylsulfanyl)-alpha-D-ribose 1-phosphate + adenine</text>
        <dbReference type="Rhea" id="RHEA:11852"/>
        <dbReference type="ChEBI" id="CHEBI:16708"/>
        <dbReference type="ChEBI" id="CHEBI:17509"/>
        <dbReference type="ChEBI" id="CHEBI:43474"/>
        <dbReference type="ChEBI" id="CHEBI:58533"/>
        <dbReference type="EC" id="2.4.2.28"/>
    </reaction>
</comment>
<comment type="biophysicochemical properties">
    <kinetics>
        <KM evidence="2">0.7 mM for S-methyl-5'-thioadenosine</KM>
        <KM evidence="2">270 uM for adenosine</KM>
    </kinetics>
    <temperatureDependence>
        <text evidence="2">Optimum temperature is 120 degrees Celsius. Highly thermostable.</text>
    </temperatureDependence>
</comment>
<comment type="pathway">
    <text evidence="1">Amino-acid biosynthesis; L-methionine biosynthesis via salvage pathway; S-methyl-5-thio-alpha-D-ribose 1-phosphate from S-methyl-5'-thioadenosine (phosphorylase route): step 1/1.</text>
</comment>
<comment type="subunit">
    <text evidence="1 2 3">Homohexamer. Dimer of a homotrimer.</text>
</comment>
<comment type="similarity">
    <text evidence="1">Belongs to the PNP/MTAP phosphorylase family. MTAP subfamily.</text>
</comment>
<accession>Q97W94</accession>
<sequence>MIEQNEKASIGIIGGSGLYDPGIFSESKEIKVYTPYGQPSDFITIGKIGNKSVAFLPRHGRGHRIPPHKINYRANIWALKELGVRWVISVSAVGSLRMDYKLGDFVIPDQFIDMTKNREYSFFDGPVVAHVSMADPFCNSLRKLAIETAKELNIKTHESGTYICIEGPRFSTRAESRTWREVYKADIIGMTLVPEVNLACEAQMCYATIAMVTDYDVFAEIPVTAEEVTRVMAENTEKAKKLLYALIQKLPEKPEEGSCSCCNSLKTALV</sequence>
<protein>
    <recommendedName>
        <fullName evidence="1">S-methyl-5'-thioadenosine phosphorylase</fullName>
        <ecNumber evidence="1">2.4.2.28</ecNumber>
    </recommendedName>
    <alternativeName>
        <fullName evidence="1">5'-methylthioadenosine phosphorylase</fullName>
        <shortName evidence="1">MTA phosphorylase</shortName>
        <shortName evidence="1">MTAP</shortName>
        <shortName evidence="1">MTAPII</shortName>
    </alternativeName>
</protein>
<dbReference type="EC" id="2.4.2.28" evidence="1"/>
<dbReference type="EMBL" id="AE006641">
    <property type="protein sequence ID" value="AAK42494.1"/>
    <property type="molecule type" value="Genomic_DNA"/>
</dbReference>
<dbReference type="PIR" id="G90404">
    <property type="entry name" value="G90404"/>
</dbReference>
<dbReference type="RefSeq" id="WP_009989516.1">
    <property type="nucleotide sequence ID" value="NC_002754.1"/>
</dbReference>
<dbReference type="PDB" id="2A8Y">
    <property type="method" value="X-ray"/>
    <property type="resolution" value="1.45 A"/>
    <property type="chains" value="A/B/C/D/E/F/G/H/I/J/K/L=1-270"/>
</dbReference>
<dbReference type="PDB" id="3T94">
    <property type="method" value="X-ray"/>
    <property type="resolution" value="1.45 A"/>
    <property type="chains" value="A/B/C/D/E/F=1-270"/>
</dbReference>
<dbReference type="PDBsum" id="2A8Y"/>
<dbReference type="PDBsum" id="3T94"/>
<dbReference type="SMR" id="Q97W94"/>
<dbReference type="FunCoup" id="Q97W94">
    <property type="interactions" value="265"/>
</dbReference>
<dbReference type="STRING" id="273057.SSO2343"/>
<dbReference type="PaxDb" id="273057-SSO2343"/>
<dbReference type="EnsemblBacteria" id="AAK42494">
    <property type="protein sequence ID" value="AAK42494"/>
    <property type="gene ID" value="SSO2343"/>
</dbReference>
<dbReference type="KEGG" id="sso:SSO2343"/>
<dbReference type="PATRIC" id="fig|273057.12.peg.2427"/>
<dbReference type="eggNOG" id="arCOG01327">
    <property type="taxonomic scope" value="Archaea"/>
</dbReference>
<dbReference type="HOGENOM" id="CLU_054456_0_2_2"/>
<dbReference type="InParanoid" id="Q97W94"/>
<dbReference type="PhylomeDB" id="Q97W94"/>
<dbReference type="BRENDA" id="2.4.2.1">
    <property type="organism ID" value="6163"/>
</dbReference>
<dbReference type="BRENDA" id="2.4.2.28">
    <property type="organism ID" value="6163"/>
</dbReference>
<dbReference type="UniPathway" id="UPA00904">
    <property type="reaction ID" value="UER00873"/>
</dbReference>
<dbReference type="EvolutionaryTrace" id="Q97W94"/>
<dbReference type="Proteomes" id="UP000001974">
    <property type="component" value="Chromosome"/>
</dbReference>
<dbReference type="GO" id="GO:0005829">
    <property type="term" value="C:cytosol"/>
    <property type="evidence" value="ECO:0000318"/>
    <property type="project" value="GO_Central"/>
</dbReference>
<dbReference type="GO" id="GO:0017061">
    <property type="term" value="F:S-methyl-5-thioadenosine phosphorylase activity"/>
    <property type="evidence" value="ECO:0000318"/>
    <property type="project" value="GO_Central"/>
</dbReference>
<dbReference type="GO" id="GO:0019509">
    <property type="term" value="P:L-methionine salvage from methylthioadenosine"/>
    <property type="evidence" value="ECO:0000318"/>
    <property type="project" value="GO_Central"/>
</dbReference>
<dbReference type="GO" id="GO:0006166">
    <property type="term" value="P:purine ribonucleoside salvage"/>
    <property type="evidence" value="ECO:0007669"/>
    <property type="project" value="UniProtKB-KW"/>
</dbReference>
<dbReference type="CDD" id="cd09010">
    <property type="entry name" value="MTAP_SsMTAPII_like_MTIP"/>
    <property type="match status" value="1"/>
</dbReference>
<dbReference type="FunFam" id="3.40.50.1580:FF:000012">
    <property type="entry name" value="Probable 6-oxopurine nucleoside phosphorylase"/>
    <property type="match status" value="1"/>
</dbReference>
<dbReference type="Gene3D" id="3.40.50.1580">
    <property type="entry name" value="Nucleoside phosphorylase domain"/>
    <property type="match status" value="1"/>
</dbReference>
<dbReference type="HAMAP" id="MF_01963">
    <property type="entry name" value="MTAP"/>
    <property type="match status" value="1"/>
</dbReference>
<dbReference type="InterPro" id="IPR010044">
    <property type="entry name" value="MTAP"/>
</dbReference>
<dbReference type="InterPro" id="IPR000845">
    <property type="entry name" value="Nucleoside_phosphorylase_d"/>
</dbReference>
<dbReference type="InterPro" id="IPR035994">
    <property type="entry name" value="Nucleoside_phosphorylase_sf"/>
</dbReference>
<dbReference type="InterPro" id="IPR018099">
    <property type="entry name" value="Purine_phosphorylase-2_CS"/>
</dbReference>
<dbReference type="NCBIfam" id="TIGR01694">
    <property type="entry name" value="MTAP"/>
    <property type="match status" value="1"/>
</dbReference>
<dbReference type="NCBIfam" id="NF006334">
    <property type="entry name" value="PRK08564.1"/>
    <property type="match status" value="1"/>
</dbReference>
<dbReference type="PANTHER" id="PTHR42679">
    <property type="entry name" value="S-METHYL-5'-THIOADENOSINE PHOSPHORYLASE"/>
    <property type="match status" value="1"/>
</dbReference>
<dbReference type="PANTHER" id="PTHR42679:SF3">
    <property type="entry name" value="S-METHYL-5'-THIOADENOSINE PHOSPHORYLASE"/>
    <property type="match status" value="1"/>
</dbReference>
<dbReference type="Pfam" id="PF01048">
    <property type="entry name" value="PNP_UDP_1"/>
    <property type="match status" value="1"/>
</dbReference>
<dbReference type="SUPFAM" id="SSF53167">
    <property type="entry name" value="Purine and uridine phosphorylases"/>
    <property type="match status" value="1"/>
</dbReference>
<dbReference type="PROSITE" id="PS01240">
    <property type="entry name" value="PNP_MTAP_2"/>
    <property type="match status" value="1"/>
</dbReference>
<organism>
    <name type="scientific">Saccharolobus solfataricus (strain ATCC 35092 / DSM 1617 / JCM 11322 / P2)</name>
    <name type="common">Sulfolobus solfataricus</name>
    <dbReference type="NCBI Taxonomy" id="273057"/>
    <lineage>
        <taxon>Archaea</taxon>
        <taxon>Thermoproteota</taxon>
        <taxon>Thermoprotei</taxon>
        <taxon>Sulfolobales</taxon>
        <taxon>Sulfolobaceae</taxon>
        <taxon>Saccharolobus</taxon>
    </lineage>
</organism>
<evidence type="ECO:0000255" key="1">
    <source>
        <dbReference type="HAMAP-Rule" id="MF_01963"/>
    </source>
</evidence>
<evidence type="ECO:0000269" key="2">
    <source>
    </source>
</evidence>
<evidence type="ECO:0000269" key="3">
    <source>
    </source>
</evidence>
<evidence type="ECO:0007829" key="4">
    <source>
        <dbReference type="PDB" id="2A8Y"/>
    </source>
</evidence>
<evidence type="ECO:0007829" key="5">
    <source>
        <dbReference type="PDB" id="3T94"/>
    </source>
</evidence>
<name>MTAP_SACS2</name>